<keyword id="KW-0378">Hydrolase</keyword>
<keyword id="KW-0472">Membrane</keyword>
<keyword id="KW-1185">Reference proteome</keyword>
<keyword id="KW-0926">Vacuole</keyword>
<organism>
    <name type="scientific">Arabidopsis thaliana</name>
    <name type="common">Mouse-ear cress</name>
    <dbReference type="NCBI Taxonomy" id="3702"/>
    <lineage>
        <taxon>Eukaryota</taxon>
        <taxon>Viridiplantae</taxon>
        <taxon>Streptophyta</taxon>
        <taxon>Embryophyta</taxon>
        <taxon>Tracheophyta</taxon>
        <taxon>Spermatophyta</taxon>
        <taxon>Magnoliopsida</taxon>
        <taxon>eudicotyledons</taxon>
        <taxon>Gunneridae</taxon>
        <taxon>Pentapetalae</taxon>
        <taxon>rosids</taxon>
        <taxon>malvids</taxon>
        <taxon>Brassicales</taxon>
        <taxon>Brassicaceae</taxon>
        <taxon>Camelineae</taxon>
        <taxon>Arabidopsis</taxon>
    </lineage>
</organism>
<gene>
    <name type="primary">SAC4</name>
    <name type="ordered locus">At5g20840</name>
    <name type="ORF">F22D1.10</name>
</gene>
<feature type="chain" id="PRO_0000421970" description="Phosphoinositide phosphatase SAC4">
    <location>
        <begin position="1"/>
        <end position="831"/>
    </location>
</feature>
<feature type="domain" description="SAC" evidence="2">
    <location>
        <begin position="162"/>
        <end position="551"/>
    </location>
</feature>
<feature type="region of interest" description="Disordered" evidence="3">
    <location>
        <begin position="439"/>
        <end position="475"/>
    </location>
</feature>
<feature type="region of interest" description="Disordered" evidence="3">
    <location>
        <begin position="785"/>
        <end position="805"/>
    </location>
</feature>
<feature type="short sequence motif" description="Phosphatase catalytic core">
    <location>
        <begin position="487"/>
        <end position="498"/>
    </location>
</feature>
<feature type="compositionally biased region" description="Basic and acidic residues" evidence="3">
    <location>
        <begin position="448"/>
        <end position="463"/>
    </location>
</feature>
<feature type="compositionally biased region" description="Basic and acidic residues" evidence="3">
    <location>
        <begin position="796"/>
        <end position="805"/>
    </location>
</feature>
<protein>
    <recommendedName>
        <fullName>Phosphoinositide phosphatase SAC4</fullName>
        <shortName>AtSAC4</shortName>
        <ecNumber>3.1.3.-</ecNumber>
    </recommendedName>
    <alternativeName>
        <fullName>Phosphatidylinositol 3,5-bisphosphate 5-phosphatase SAC4</fullName>
    </alternativeName>
    <alternativeName>
        <fullName>Protein SUPPRESSOR OF ACTIN 4</fullName>
    </alternativeName>
    <alternativeName>
        <fullName>SAC domain protein 4</fullName>
    </alternativeName>
</protein>
<sequence length="831" mass="94047">MTSSPSVENGGSGSSGSSALLGCMQQFKLFETQANFYMIGWNGSGVYRILKIDRLEASELNLREDSTAYTKKECYELLKRIHEGNKATGGLKLVTVCYGIIGFIKFLGPYYMLLITERREIGEICGHIVYEVSKSDMIALQHSSVLCNTANLRDENRYKRLLCMVDLTKDFFFSYSYNIMRSFQKNICDHESGGTLYKKMFVWNEFLTRGTRHHLRNTLWTVALVYGFFKQTILSEAGRNFKLTLIARRSRHNAGTRYLKRGINESGNVANDVETEQIVSEDVPVDRPMQISSVVQNRGSIPLFWSQETSRMKVKPDIVLSKRDLNYEATRVHFENLVERYGVPIIILNLIKTNERKPRESILRAEFANAIDFINKDLPEENRLRFLHWDLHKHFHSKTENVLALLGKVAACALMLTGFFYYQLTPAMKLEGYMSLSSSDADTSPHNSSDDDSRDYDSLEKNCRPSKNVANGDYDVKPSRLQSGVLRTNCIDCLDRTNVAQYAYGWAALGQQLHALGIRDAPTIELDDPLSSTLMGLYERMGDTLAYQYGGSAAHNKVFSERRGQWRAATQSQEFLRTLQRYYNNAYMDADKQDAINIFLGTFRPEQGSQAVWELRSDSHSNGRSGEISMGEDEKFLVKRCLSDGNILHESHTPMSAMSRKNESISHRGFVSSHQVTRTHIISESSPDMPAAGDVTLSRCTPSMPSTHFFGDVQKVQHNGSSSIYLSEQEDMSSVSNFVDIEWLSSSENLCENDHLSRPSALTIYSTAETSSSENIITEVKQLTPAMRESGSSSRKGKEPVETELSVHTKIRDDFPDSFKQWVAYGEALCH</sequence>
<dbReference type="EC" id="3.1.3.-"/>
<dbReference type="EMBL" id="AY227247">
    <property type="protein sequence ID" value="AAP49837.1"/>
    <property type="molecule type" value="mRNA"/>
</dbReference>
<dbReference type="EMBL" id="AF296834">
    <property type="status" value="NOT_ANNOTATED_CDS"/>
    <property type="molecule type" value="Genomic_DNA"/>
</dbReference>
<dbReference type="EMBL" id="CP002688">
    <property type="protein sequence ID" value="AED92896.1"/>
    <property type="molecule type" value="Genomic_DNA"/>
</dbReference>
<dbReference type="RefSeq" id="NP_197584.2">
    <property type="nucleotide sequence ID" value="NM_122091.3"/>
</dbReference>
<dbReference type="SMR" id="Q7XZU1"/>
<dbReference type="FunCoup" id="Q7XZU1">
    <property type="interactions" value="4294"/>
</dbReference>
<dbReference type="STRING" id="3702.Q7XZU1"/>
<dbReference type="iPTMnet" id="Q7XZU1"/>
<dbReference type="PaxDb" id="3702-AT5G20840.1"/>
<dbReference type="ProteomicsDB" id="226641"/>
<dbReference type="EnsemblPlants" id="AT5G20840.1">
    <property type="protein sequence ID" value="AT5G20840.1"/>
    <property type="gene ID" value="AT5G20840"/>
</dbReference>
<dbReference type="GeneID" id="832207"/>
<dbReference type="Gramene" id="AT5G20840.1">
    <property type="protein sequence ID" value="AT5G20840.1"/>
    <property type="gene ID" value="AT5G20840"/>
</dbReference>
<dbReference type="KEGG" id="ath:AT5G20840"/>
<dbReference type="Araport" id="AT5G20840"/>
<dbReference type="TAIR" id="AT5G20840">
    <property type="gene designation" value="SAC4"/>
</dbReference>
<dbReference type="eggNOG" id="KOG1888">
    <property type="taxonomic scope" value="Eukaryota"/>
</dbReference>
<dbReference type="HOGENOM" id="CLU_003016_4_2_1"/>
<dbReference type="InParanoid" id="Q7XZU1"/>
<dbReference type="OMA" id="TNERKPR"/>
<dbReference type="PhylomeDB" id="Q7XZU1"/>
<dbReference type="BioCyc" id="ARA:AT5G20840-MONOMER"/>
<dbReference type="PRO" id="PR:Q7XZU1"/>
<dbReference type="Proteomes" id="UP000006548">
    <property type="component" value="Chromosome 5"/>
</dbReference>
<dbReference type="ExpressionAtlas" id="Q7XZU1">
    <property type="expression patterns" value="baseline and differential"/>
</dbReference>
<dbReference type="GO" id="GO:0009506">
    <property type="term" value="C:plasmodesma"/>
    <property type="evidence" value="ECO:0007005"/>
    <property type="project" value="TAIR"/>
</dbReference>
<dbReference type="GO" id="GO:0005774">
    <property type="term" value="C:vacuolar membrane"/>
    <property type="evidence" value="ECO:0007669"/>
    <property type="project" value="UniProtKB-SubCell"/>
</dbReference>
<dbReference type="GO" id="GO:0043813">
    <property type="term" value="F:phosphatidylinositol-3,5-bisphosphate 5-phosphatase activity"/>
    <property type="evidence" value="ECO:0007669"/>
    <property type="project" value="InterPro"/>
</dbReference>
<dbReference type="GO" id="GO:0046856">
    <property type="term" value="P:phosphatidylinositol dephosphorylation"/>
    <property type="evidence" value="ECO:0007669"/>
    <property type="project" value="InterPro"/>
</dbReference>
<dbReference type="InterPro" id="IPR043573">
    <property type="entry name" value="Fig4-like"/>
</dbReference>
<dbReference type="InterPro" id="IPR002013">
    <property type="entry name" value="SAC_dom"/>
</dbReference>
<dbReference type="PANTHER" id="PTHR45738:SF25">
    <property type="entry name" value="PHOSPHOINOSITIDE PHOSPHATASE SAC3-RELATED"/>
    <property type="match status" value="1"/>
</dbReference>
<dbReference type="PANTHER" id="PTHR45738">
    <property type="entry name" value="POLYPHOSPHOINOSITIDE PHOSPHATASE"/>
    <property type="match status" value="1"/>
</dbReference>
<dbReference type="Pfam" id="PF02383">
    <property type="entry name" value="Syja_N"/>
    <property type="match status" value="1"/>
</dbReference>
<dbReference type="PROSITE" id="PS50275">
    <property type="entry name" value="SAC"/>
    <property type="match status" value="1"/>
</dbReference>
<accession>Q7XZU1</accession>
<evidence type="ECO:0000250" key="1"/>
<evidence type="ECO:0000255" key="2">
    <source>
        <dbReference type="PROSITE-ProRule" id="PRU00183"/>
    </source>
</evidence>
<evidence type="ECO:0000256" key="3">
    <source>
        <dbReference type="SAM" id="MobiDB-lite"/>
    </source>
</evidence>
<evidence type="ECO:0000269" key="4">
    <source>
    </source>
</evidence>
<name>SAC4_ARATH</name>
<comment type="function">
    <text evidence="1">The PI(3,5)P2 regulatory complex regulates both the synthesis and turnover of phosphatidylinositol 3,5-bisphosphate (PtdIns(3,5)P2).</text>
</comment>
<comment type="catalytic activity">
    <reaction>
        <text>a 1,2-diacyl-sn-glycero-3-phospho-(1D-myo-inositol-3,5-bisphosphate) + H2O = a 1,2-diacyl-sn-glycero-3-phospho-(1D-myo-inositol-3-phosphate) + phosphate</text>
        <dbReference type="Rhea" id="RHEA:32955"/>
        <dbReference type="ChEBI" id="CHEBI:15377"/>
        <dbReference type="ChEBI" id="CHEBI:43474"/>
        <dbReference type="ChEBI" id="CHEBI:57923"/>
        <dbReference type="ChEBI" id="CHEBI:58088"/>
    </reaction>
</comment>
<comment type="cofactor">
    <cofactor evidence="1">
        <name>Mg(2+)</name>
        <dbReference type="ChEBI" id="CHEBI:18420"/>
    </cofactor>
</comment>
<comment type="subunit">
    <text evidence="1">Component of the PI(3,5)P2 regulatory complex at least composed of ATG18, SAC/FIG4, FAB1 and VAC14.</text>
</comment>
<comment type="subcellular location">
    <subcellularLocation>
        <location evidence="1">Vacuole membrane</location>
        <topology evidence="1">Peripheral membrane protein</topology>
    </subcellularLocation>
</comment>
<comment type="tissue specificity">
    <text evidence="4">Ubiquitous with a higher level of expression in young seedlings than in other tissues.</text>
</comment>
<comment type="domain">
    <text evidence="1">The phosphatase catalytic core motif (or RXNCXDCLDRTN motif) from the SAC domain is found in metal-independent protein phosphatases and inositol polyphosphate phosphatases.</text>
</comment>
<reference key="1">
    <citation type="journal article" date="2003" name="Plant Physiol.">
        <title>The SAC domain-containing protein gene family in Arabidopsis.</title>
        <authorList>
            <person name="Zhong R."/>
            <person name="Ye Z.-H."/>
        </authorList>
    </citation>
    <scope>NUCLEOTIDE SEQUENCE [MRNA]</scope>
    <scope>GENE FAMILY</scope>
    <scope>DOMAIN</scope>
    <scope>TISSUE SPECIFICITY</scope>
</reference>
<reference key="2">
    <citation type="journal article" date="2000" name="Nature">
        <title>Sequence and analysis of chromosome 5 of the plant Arabidopsis thaliana.</title>
        <authorList>
            <person name="Tabata S."/>
            <person name="Kaneko T."/>
            <person name="Nakamura Y."/>
            <person name="Kotani H."/>
            <person name="Kato T."/>
            <person name="Asamizu E."/>
            <person name="Miyajima N."/>
            <person name="Sasamoto S."/>
            <person name="Kimura T."/>
            <person name="Hosouchi T."/>
            <person name="Kawashima K."/>
            <person name="Kohara M."/>
            <person name="Matsumoto M."/>
            <person name="Matsuno A."/>
            <person name="Muraki A."/>
            <person name="Nakayama S."/>
            <person name="Nakazaki N."/>
            <person name="Naruo K."/>
            <person name="Okumura S."/>
            <person name="Shinpo S."/>
            <person name="Takeuchi C."/>
            <person name="Wada T."/>
            <person name="Watanabe A."/>
            <person name="Yamada M."/>
            <person name="Yasuda M."/>
            <person name="Sato S."/>
            <person name="de la Bastide M."/>
            <person name="Huang E."/>
            <person name="Spiegel L."/>
            <person name="Gnoj L."/>
            <person name="O'Shaughnessy A."/>
            <person name="Preston R."/>
            <person name="Habermann K."/>
            <person name="Murray J."/>
            <person name="Johnson D."/>
            <person name="Rohlfing T."/>
            <person name="Nelson J."/>
            <person name="Stoneking T."/>
            <person name="Pepin K."/>
            <person name="Spieth J."/>
            <person name="Sekhon M."/>
            <person name="Armstrong J."/>
            <person name="Becker M."/>
            <person name="Belter E."/>
            <person name="Cordum H."/>
            <person name="Cordes M."/>
            <person name="Courtney L."/>
            <person name="Courtney W."/>
            <person name="Dante M."/>
            <person name="Du H."/>
            <person name="Edwards J."/>
            <person name="Fryman J."/>
            <person name="Haakensen B."/>
            <person name="Lamar E."/>
            <person name="Latreille P."/>
            <person name="Leonard S."/>
            <person name="Meyer R."/>
            <person name="Mulvaney E."/>
            <person name="Ozersky P."/>
            <person name="Riley A."/>
            <person name="Strowmatt C."/>
            <person name="Wagner-McPherson C."/>
            <person name="Wollam A."/>
            <person name="Yoakum M."/>
            <person name="Bell M."/>
            <person name="Dedhia N."/>
            <person name="Parnell L."/>
            <person name="Shah R."/>
            <person name="Rodriguez M."/>
            <person name="Hoon See L."/>
            <person name="Vil D."/>
            <person name="Baker J."/>
            <person name="Kirchoff K."/>
            <person name="Toth K."/>
            <person name="King L."/>
            <person name="Bahret A."/>
            <person name="Miller B."/>
            <person name="Marra M.A."/>
            <person name="Martienssen R."/>
            <person name="McCombie W.R."/>
            <person name="Wilson R.K."/>
            <person name="Murphy G."/>
            <person name="Bancroft I."/>
            <person name="Volckaert G."/>
            <person name="Wambutt R."/>
            <person name="Duesterhoeft A."/>
            <person name="Stiekema W."/>
            <person name="Pohl T."/>
            <person name="Entian K.-D."/>
            <person name="Terryn N."/>
            <person name="Hartley N."/>
            <person name="Bent E."/>
            <person name="Johnson S."/>
            <person name="Langham S.-A."/>
            <person name="McCullagh B."/>
            <person name="Robben J."/>
            <person name="Grymonprez B."/>
            <person name="Zimmermann W."/>
            <person name="Ramsperger U."/>
            <person name="Wedler H."/>
            <person name="Balke K."/>
            <person name="Wedler E."/>
            <person name="Peters S."/>
            <person name="van Staveren M."/>
            <person name="Dirkse W."/>
            <person name="Mooijman P."/>
            <person name="Klein Lankhorst R."/>
            <person name="Weitzenegger T."/>
            <person name="Bothe G."/>
            <person name="Rose M."/>
            <person name="Hauf J."/>
            <person name="Berneiser S."/>
            <person name="Hempel S."/>
            <person name="Feldpausch M."/>
            <person name="Lamberth S."/>
            <person name="Villarroel R."/>
            <person name="Gielen J."/>
            <person name="Ardiles W."/>
            <person name="Bents O."/>
            <person name="Lemcke K."/>
            <person name="Kolesov G."/>
            <person name="Mayer K.F.X."/>
            <person name="Rudd S."/>
            <person name="Schoof H."/>
            <person name="Schueller C."/>
            <person name="Zaccaria P."/>
            <person name="Mewes H.-W."/>
            <person name="Bevan M."/>
            <person name="Fransz P.F."/>
        </authorList>
    </citation>
    <scope>NUCLEOTIDE SEQUENCE [LARGE SCALE GENOMIC DNA]</scope>
    <source>
        <strain>cv. Columbia</strain>
    </source>
</reference>
<reference key="3">
    <citation type="journal article" date="2017" name="Plant J.">
        <title>Araport11: a complete reannotation of the Arabidopsis thaliana reference genome.</title>
        <authorList>
            <person name="Cheng C.Y."/>
            <person name="Krishnakumar V."/>
            <person name="Chan A.P."/>
            <person name="Thibaud-Nissen F."/>
            <person name="Schobel S."/>
            <person name="Town C.D."/>
        </authorList>
    </citation>
    <scope>GENOME REANNOTATION</scope>
    <source>
        <strain>cv. Columbia</strain>
    </source>
</reference>
<proteinExistence type="evidence at transcript level"/>